<proteinExistence type="inferred from homology"/>
<dbReference type="EMBL" id="AH005812">
    <property type="protein sequence ID" value="AAB95489.1"/>
    <property type="molecule type" value="Genomic_DNA"/>
</dbReference>
<dbReference type="RefSeq" id="XP_003813559.1">
    <property type="nucleotide sequence ID" value="XM_003813511.5"/>
</dbReference>
<dbReference type="SMR" id="P60573"/>
<dbReference type="STRING" id="9597.ENSPPAP00000035594"/>
<dbReference type="GlyCosmos" id="P60573">
    <property type="glycosylation" value="1 site, No reported glycans"/>
</dbReference>
<dbReference type="Ensembl" id="ENSPPAT00000058483.1">
    <property type="protein sequence ID" value="ENSPPAP00000035594.1"/>
    <property type="gene ID" value="ENSPPAG00000040601.1"/>
</dbReference>
<dbReference type="GeneID" id="100994475"/>
<dbReference type="KEGG" id="pps:100994475"/>
<dbReference type="CTD" id="611"/>
<dbReference type="eggNOG" id="KOG3656">
    <property type="taxonomic scope" value="Eukaryota"/>
</dbReference>
<dbReference type="GeneTree" id="ENSGT01030000234549"/>
<dbReference type="OMA" id="QTAFMGF"/>
<dbReference type="OrthoDB" id="2933at9604"/>
<dbReference type="Proteomes" id="UP000240080">
    <property type="component" value="Chromosome 7"/>
</dbReference>
<dbReference type="Bgee" id="ENSPPAG00000040601">
    <property type="expression patterns" value="Expressed in placenta and 5 other cell types or tissues"/>
</dbReference>
<dbReference type="GO" id="GO:0120199">
    <property type="term" value="C:cone photoreceptor outer segment"/>
    <property type="evidence" value="ECO:0007669"/>
    <property type="project" value="Ensembl"/>
</dbReference>
<dbReference type="GO" id="GO:0048471">
    <property type="term" value="C:perinuclear region of cytoplasm"/>
    <property type="evidence" value="ECO:0000250"/>
    <property type="project" value="UniProtKB"/>
</dbReference>
<dbReference type="GO" id="GO:0097381">
    <property type="term" value="C:photoreceptor disc membrane"/>
    <property type="evidence" value="ECO:0007669"/>
    <property type="project" value="UniProtKB-ARBA"/>
</dbReference>
<dbReference type="GO" id="GO:0001917">
    <property type="term" value="C:photoreceptor inner segment"/>
    <property type="evidence" value="ECO:0007669"/>
    <property type="project" value="UniProtKB-SubCell"/>
</dbReference>
<dbReference type="GO" id="GO:0005886">
    <property type="term" value="C:plasma membrane"/>
    <property type="evidence" value="ECO:0000250"/>
    <property type="project" value="UniProtKB"/>
</dbReference>
<dbReference type="GO" id="GO:0004930">
    <property type="term" value="F:G protein-coupled receptor activity"/>
    <property type="evidence" value="ECO:0007669"/>
    <property type="project" value="UniProtKB-KW"/>
</dbReference>
<dbReference type="GO" id="GO:0009881">
    <property type="term" value="F:photoreceptor activity"/>
    <property type="evidence" value="ECO:0007669"/>
    <property type="project" value="UniProtKB-KW"/>
</dbReference>
<dbReference type="GO" id="GO:0071492">
    <property type="term" value="P:cellular response to UV-A"/>
    <property type="evidence" value="ECO:0000250"/>
    <property type="project" value="UniProtKB"/>
</dbReference>
<dbReference type="GO" id="GO:0007602">
    <property type="term" value="P:phototransduction"/>
    <property type="evidence" value="ECO:0007669"/>
    <property type="project" value="UniProtKB-KW"/>
</dbReference>
<dbReference type="GO" id="GO:0007601">
    <property type="term" value="P:visual perception"/>
    <property type="evidence" value="ECO:0007669"/>
    <property type="project" value="UniProtKB-KW"/>
</dbReference>
<dbReference type="CDD" id="cd15076">
    <property type="entry name" value="7tmA_SWS1_opsin"/>
    <property type="match status" value="1"/>
</dbReference>
<dbReference type="FunFam" id="1.20.1070.10:FF:000018">
    <property type="entry name" value="Rhodopsin"/>
    <property type="match status" value="1"/>
</dbReference>
<dbReference type="Gene3D" id="1.20.1070.10">
    <property type="entry name" value="Rhodopsin 7-helix transmembrane proteins"/>
    <property type="match status" value="1"/>
</dbReference>
<dbReference type="InterPro" id="IPR050125">
    <property type="entry name" value="GPCR_opsins"/>
</dbReference>
<dbReference type="InterPro" id="IPR000276">
    <property type="entry name" value="GPCR_Rhodpsn"/>
</dbReference>
<dbReference type="InterPro" id="IPR017452">
    <property type="entry name" value="GPCR_Rhodpsn_7TM"/>
</dbReference>
<dbReference type="InterPro" id="IPR001760">
    <property type="entry name" value="Opsin"/>
</dbReference>
<dbReference type="InterPro" id="IPR001521">
    <property type="entry name" value="Opsin_blue"/>
</dbReference>
<dbReference type="InterPro" id="IPR027430">
    <property type="entry name" value="Retinal_BS"/>
</dbReference>
<dbReference type="PANTHER" id="PTHR24240">
    <property type="entry name" value="OPSIN"/>
    <property type="match status" value="1"/>
</dbReference>
<dbReference type="Pfam" id="PF00001">
    <property type="entry name" value="7tm_1"/>
    <property type="match status" value="1"/>
</dbReference>
<dbReference type="PRINTS" id="PR00237">
    <property type="entry name" value="GPCRRHODOPSN"/>
</dbReference>
<dbReference type="PRINTS" id="PR00238">
    <property type="entry name" value="OPSIN"/>
</dbReference>
<dbReference type="PRINTS" id="PR00574">
    <property type="entry name" value="OPSINBLUE"/>
</dbReference>
<dbReference type="SUPFAM" id="SSF81321">
    <property type="entry name" value="Family A G protein-coupled receptor-like"/>
    <property type="match status" value="1"/>
</dbReference>
<dbReference type="PROSITE" id="PS00237">
    <property type="entry name" value="G_PROTEIN_RECEP_F1_1"/>
    <property type="match status" value="1"/>
</dbReference>
<dbReference type="PROSITE" id="PS50262">
    <property type="entry name" value="G_PROTEIN_RECEP_F1_2"/>
    <property type="match status" value="1"/>
</dbReference>
<dbReference type="PROSITE" id="PS00238">
    <property type="entry name" value="OPSIN"/>
    <property type="match status" value="1"/>
</dbReference>
<accession>P60573</accession>
<reference key="1">
    <citation type="journal article" date="1998" name="Mol. Biol. Evol.">
        <title>Contrasting levels of DNA polymorphism at the autosomal and X-linked visual color pigment loci in humans and squirrel monkeys.</title>
        <authorList>
            <person name="Shimmin L.C."/>
            <person name="Miller J."/>
            <person name="Tran H.N."/>
            <person name="Li W.H."/>
        </authorList>
    </citation>
    <scope>NUCLEOTIDE SEQUENCE [GENOMIC DNA]</scope>
</reference>
<feature type="chain" id="PRO_0000197763" description="Short-wave-sensitive opsin 1">
    <location>
        <begin position="1"/>
        <end position="348"/>
    </location>
</feature>
<feature type="topological domain" description="Extracellular" evidence="4">
    <location>
        <begin position="1"/>
        <end position="33"/>
    </location>
</feature>
<feature type="transmembrane region" description="Helical; Name=1" evidence="4">
    <location>
        <begin position="34"/>
        <end position="58"/>
    </location>
</feature>
<feature type="topological domain" description="Cytoplasmic" evidence="4">
    <location>
        <begin position="59"/>
        <end position="70"/>
    </location>
</feature>
<feature type="transmembrane region" description="Helical; Name=2" evidence="4">
    <location>
        <begin position="71"/>
        <end position="96"/>
    </location>
</feature>
<feature type="topological domain" description="Extracellular" evidence="4">
    <location>
        <begin position="97"/>
        <end position="110"/>
    </location>
</feature>
<feature type="transmembrane region" description="Helical; Name=3" evidence="4">
    <location>
        <begin position="111"/>
        <end position="130"/>
    </location>
</feature>
<feature type="topological domain" description="Cytoplasmic" evidence="4">
    <location>
        <begin position="131"/>
        <end position="149"/>
    </location>
</feature>
<feature type="transmembrane region" description="Helical; Name=4" evidence="4">
    <location>
        <begin position="150"/>
        <end position="173"/>
    </location>
</feature>
<feature type="topological domain" description="Extracellular" evidence="4">
    <location>
        <begin position="174"/>
        <end position="199"/>
    </location>
</feature>
<feature type="transmembrane region" description="Helical; Name=5" evidence="4">
    <location>
        <begin position="200"/>
        <end position="227"/>
    </location>
</feature>
<feature type="topological domain" description="Cytoplasmic" evidence="4">
    <location>
        <begin position="228"/>
        <end position="249"/>
    </location>
</feature>
<feature type="transmembrane region" description="Helical; Name=6" evidence="4">
    <location>
        <begin position="250"/>
        <end position="273"/>
    </location>
</feature>
<feature type="topological domain" description="Extracellular" evidence="4">
    <location>
        <begin position="274"/>
        <end position="281"/>
    </location>
</feature>
<feature type="transmembrane region" description="Helical; Name=7" evidence="4">
    <location>
        <begin position="282"/>
        <end position="306"/>
    </location>
</feature>
<feature type="topological domain" description="Cytoplasmic" evidence="4">
    <location>
        <begin position="307"/>
        <end position="348"/>
    </location>
</feature>
<feature type="modified residue" description="N6-(retinylidene)lysine" evidence="1">
    <location>
        <position position="293"/>
    </location>
</feature>
<feature type="glycosylation site" description="N-linked (GlcNAc...) asparagine" evidence="4">
    <location>
        <position position="14"/>
    </location>
</feature>
<feature type="disulfide bond" evidence="5">
    <location>
        <begin position="107"/>
        <end position="184"/>
    </location>
</feature>
<keyword id="KW-1003">Cell membrane</keyword>
<keyword id="KW-0966">Cell projection</keyword>
<keyword id="KW-0157">Chromophore</keyword>
<keyword id="KW-0963">Cytoplasm</keyword>
<keyword id="KW-1015">Disulfide bond</keyword>
<keyword id="KW-0297">G-protein coupled receptor</keyword>
<keyword id="KW-0325">Glycoprotein</keyword>
<keyword id="KW-0472">Membrane</keyword>
<keyword id="KW-0597">Phosphoprotein</keyword>
<keyword id="KW-0600">Photoreceptor protein</keyword>
<keyword id="KW-0675">Receptor</keyword>
<keyword id="KW-1185">Reference proteome</keyword>
<keyword id="KW-0681">Retinal protein</keyword>
<keyword id="KW-0716">Sensory transduction</keyword>
<keyword id="KW-0807">Transducer</keyword>
<keyword id="KW-0812">Transmembrane</keyword>
<keyword id="KW-1133">Transmembrane helix</keyword>
<keyword id="KW-0844">Vision</keyword>
<protein>
    <recommendedName>
        <fullName>Short-wave-sensitive opsin 1</fullName>
    </recommendedName>
    <alternativeName>
        <fullName>Blue cone photoreceptor pigment</fullName>
    </alternativeName>
    <alternativeName>
        <fullName>Blue-sensitive opsin</fullName>
        <shortName>BOP</shortName>
    </alternativeName>
</protein>
<comment type="function">
    <text evidence="2 3">Visual pigments are the light-absorbing molecules that mediate vision. They consist of an apoprotein, opsin, covalently linked to cis-retinal (By similarity). Required for the maintenance of cone outer segment organization in the ventral retina, but not essential for the maintenance of functioning cone photoreceptors (By similarity). Involved in ensuring correct abundance and localization of retinal membrane proteins (By similarity). May increase spectral sensitivity in dim light (By similarity).</text>
</comment>
<comment type="subcellular location">
    <subcellularLocation>
        <location evidence="2">Cell membrane</location>
        <topology evidence="4">Multi-pass membrane protein</topology>
    </subcellularLocation>
    <subcellularLocation>
        <location evidence="3">Photoreceptor inner segment</location>
    </subcellularLocation>
    <subcellularLocation>
        <location evidence="3">Cell projection</location>
        <location evidence="3">Cilium</location>
        <location evidence="3">Photoreceptor outer segment</location>
    </subcellularLocation>
    <subcellularLocation>
        <location evidence="2">Cytoplasm</location>
        <location evidence="2">Perinuclear region</location>
    </subcellularLocation>
</comment>
<comment type="PTM">
    <text evidence="1">Phosphorylated on some or all of the serine and threonine residues present in the C-terminal region.</text>
</comment>
<comment type="similarity">
    <text evidence="5">Belongs to the G-protein coupled receptor 1 family. Opsin subfamily.</text>
</comment>
<sequence>MRKMSEEEFYLFKNISSVGPWDGPQYHIAPVWAFYLQAAFMGTVFLIGFPLNAMVLVATLRYKKLRQPLNYILVNVSFGGFLLCIFSVFPVFVASCNGYFVFGRHVCALEGFLGTVAGLVTGWSLAFLAFERYIVICKPFGNFRFSSKHALTVVLATWTIGIGVSIPPFFGWSRFIPEGLQCSCGPDWYTVGTKYRSESYTWFLFIFCFIVPLSLICFSYTQLLRALKAVAAQQQESATTQKAEREVSRMVVVMVGSFCVCYVPYAAFAMYMVNNRNHGLDLRLVTIPSFFSKSACIYNPIIYCFMNKQFQACIMKMVCGKAMTDESDTCSSQKTEVSTVSSTQVGPN</sequence>
<name>OPSB_PANPA</name>
<gene>
    <name type="primary">OPN1SW</name>
    <name type="synonym">BCP</name>
</gene>
<organism>
    <name type="scientific">Pan paniscus</name>
    <name type="common">Pygmy chimpanzee</name>
    <name type="synonym">Bonobo</name>
    <dbReference type="NCBI Taxonomy" id="9597"/>
    <lineage>
        <taxon>Eukaryota</taxon>
        <taxon>Metazoa</taxon>
        <taxon>Chordata</taxon>
        <taxon>Craniata</taxon>
        <taxon>Vertebrata</taxon>
        <taxon>Euteleostomi</taxon>
        <taxon>Mammalia</taxon>
        <taxon>Eutheria</taxon>
        <taxon>Euarchontoglires</taxon>
        <taxon>Primates</taxon>
        <taxon>Haplorrhini</taxon>
        <taxon>Catarrhini</taxon>
        <taxon>Hominidae</taxon>
        <taxon>Pan</taxon>
    </lineage>
</organism>
<evidence type="ECO:0000250" key="1"/>
<evidence type="ECO:0000250" key="2">
    <source>
        <dbReference type="UniProtKB" id="P03999"/>
    </source>
</evidence>
<evidence type="ECO:0000250" key="3">
    <source>
        <dbReference type="UniProtKB" id="P51491"/>
    </source>
</evidence>
<evidence type="ECO:0000255" key="4"/>
<evidence type="ECO:0000255" key="5">
    <source>
        <dbReference type="PROSITE-ProRule" id="PRU00521"/>
    </source>
</evidence>